<accession>A4QBY8</accession>
<comment type="function">
    <text evidence="1">Catalyzes the oxidation of 5,10-methylenetetrahydrofolate to 5,10-methenyltetrahydrofolate and then the hydrolysis of 5,10-methenyltetrahydrofolate to 10-formyltetrahydrofolate.</text>
</comment>
<comment type="catalytic activity">
    <reaction evidence="1">
        <text>(6R)-5,10-methylene-5,6,7,8-tetrahydrofolate + NADP(+) = (6R)-5,10-methenyltetrahydrofolate + NADPH</text>
        <dbReference type="Rhea" id="RHEA:22812"/>
        <dbReference type="ChEBI" id="CHEBI:15636"/>
        <dbReference type="ChEBI" id="CHEBI:57455"/>
        <dbReference type="ChEBI" id="CHEBI:57783"/>
        <dbReference type="ChEBI" id="CHEBI:58349"/>
        <dbReference type="EC" id="1.5.1.5"/>
    </reaction>
</comment>
<comment type="catalytic activity">
    <reaction evidence="1">
        <text>(6R)-5,10-methenyltetrahydrofolate + H2O = (6R)-10-formyltetrahydrofolate + H(+)</text>
        <dbReference type="Rhea" id="RHEA:23700"/>
        <dbReference type="ChEBI" id="CHEBI:15377"/>
        <dbReference type="ChEBI" id="CHEBI:15378"/>
        <dbReference type="ChEBI" id="CHEBI:57455"/>
        <dbReference type="ChEBI" id="CHEBI:195366"/>
        <dbReference type="EC" id="3.5.4.9"/>
    </reaction>
</comment>
<comment type="pathway">
    <text evidence="1">One-carbon metabolism; tetrahydrofolate interconversion.</text>
</comment>
<comment type="subunit">
    <text evidence="1">Homodimer.</text>
</comment>
<comment type="similarity">
    <text evidence="1">Belongs to the tetrahydrofolate dehydrogenase/cyclohydrolase family.</text>
</comment>
<proteinExistence type="inferred from homology"/>
<organism>
    <name type="scientific">Corynebacterium glutamicum (strain R)</name>
    <dbReference type="NCBI Taxonomy" id="340322"/>
    <lineage>
        <taxon>Bacteria</taxon>
        <taxon>Bacillati</taxon>
        <taxon>Actinomycetota</taxon>
        <taxon>Actinomycetes</taxon>
        <taxon>Mycobacteriales</taxon>
        <taxon>Corynebacteriaceae</taxon>
        <taxon>Corynebacterium</taxon>
    </lineage>
</organism>
<evidence type="ECO:0000255" key="1">
    <source>
        <dbReference type="HAMAP-Rule" id="MF_01576"/>
    </source>
</evidence>
<feature type="chain" id="PRO_0000305810" description="Bifunctional protein FolD">
    <location>
        <begin position="1"/>
        <end position="284"/>
    </location>
</feature>
<feature type="binding site" evidence="1">
    <location>
        <begin position="165"/>
        <end position="167"/>
    </location>
    <ligand>
        <name>NADP(+)</name>
        <dbReference type="ChEBI" id="CHEBI:58349"/>
    </ligand>
</feature>
<feature type="binding site" evidence="1">
    <location>
        <position position="192"/>
    </location>
    <ligand>
        <name>NADP(+)</name>
        <dbReference type="ChEBI" id="CHEBI:58349"/>
    </ligand>
</feature>
<feature type="binding site" evidence="1">
    <location>
        <position position="233"/>
    </location>
    <ligand>
        <name>NADP(+)</name>
        <dbReference type="ChEBI" id="CHEBI:58349"/>
    </ligand>
</feature>
<dbReference type="EC" id="1.5.1.5" evidence="1"/>
<dbReference type="EC" id="3.5.4.9" evidence="1"/>
<dbReference type="EMBL" id="AP009044">
    <property type="protein sequence ID" value="BAF53735.1"/>
    <property type="molecule type" value="Genomic_DNA"/>
</dbReference>
<dbReference type="RefSeq" id="WP_003860764.1">
    <property type="nucleotide sequence ID" value="NC_009342.1"/>
</dbReference>
<dbReference type="SMR" id="A4QBY8"/>
<dbReference type="GeneID" id="1018649"/>
<dbReference type="KEGG" id="cgt:cgR_0763"/>
<dbReference type="HOGENOM" id="CLU_034045_3_0_11"/>
<dbReference type="PhylomeDB" id="A4QBY8"/>
<dbReference type="UniPathway" id="UPA00193"/>
<dbReference type="Proteomes" id="UP000006698">
    <property type="component" value="Chromosome"/>
</dbReference>
<dbReference type="GO" id="GO:0005829">
    <property type="term" value="C:cytosol"/>
    <property type="evidence" value="ECO:0007669"/>
    <property type="project" value="TreeGrafter"/>
</dbReference>
<dbReference type="GO" id="GO:0004477">
    <property type="term" value="F:methenyltetrahydrofolate cyclohydrolase activity"/>
    <property type="evidence" value="ECO:0007669"/>
    <property type="project" value="UniProtKB-UniRule"/>
</dbReference>
<dbReference type="GO" id="GO:0004488">
    <property type="term" value="F:methylenetetrahydrofolate dehydrogenase (NADP+) activity"/>
    <property type="evidence" value="ECO:0007669"/>
    <property type="project" value="UniProtKB-UniRule"/>
</dbReference>
<dbReference type="GO" id="GO:0000105">
    <property type="term" value="P:L-histidine biosynthetic process"/>
    <property type="evidence" value="ECO:0007669"/>
    <property type="project" value="UniProtKB-KW"/>
</dbReference>
<dbReference type="GO" id="GO:0009086">
    <property type="term" value="P:methionine biosynthetic process"/>
    <property type="evidence" value="ECO:0007669"/>
    <property type="project" value="UniProtKB-KW"/>
</dbReference>
<dbReference type="GO" id="GO:0006164">
    <property type="term" value="P:purine nucleotide biosynthetic process"/>
    <property type="evidence" value="ECO:0007669"/>
    <property type="project" value="UniProtKB-KW"/>
</dbReference>
<dbReference type="GO" id="GO:0035999">
    <property type="term" value="P:tetrahydrofolate interconversion"/>
    <property type="evidence" value="ECO:0007669"/>
    <property type="project" value="UniProtKB-UniRule"/>
</dbReference>
<dbReference type="CDD" id="cd01080">
    <property type="entry name" value="NAD_bind_m-THF_DH_Cyclohyd"/>
    <property type="match status" value="1"/>
</dbReference>
<dbReference type="FunFam" id="3.40.50.720:FF:000094">
    <property type="entry name" value="Bifunctional protein FolD"/>
    <property type="match status" value="1"/>
</dbReference>
<dbReference type="FunFam" id="3.40.50.10860:FF:000005">
    <property type="entry name" value="C-1-tetrahydrofolate synthase, cytoplasmic, putative"/>
    <property type="match status" value="1"/>
</dbReference>
<dbReference type="Gene3D" id="3.40.50.10860">
    <property type="entry name" value="Leucine Dehydrogenase, chain A, domain 1"/>
    <property type="match status" value="1"/>
</dbReference>
<dbReference type="Gene3D" id="3.40.50.720">
    <property type="entry name" value="NAD(P)-binding Rossmann-like Domain"/>
    <property type="match status" value="1"/>
</dbReference>
<dbReference type="HAMAP" id="MF_01576">
    <property type="entry name" value="THF_DHG_CYH"/>
    <property type="match status" value="1"/>
</dbReference>
<dbReference type="InterPro" id="IPR046346">
    <property type="entry name" value="Aminoacid_DH-like_N_sf"/>
</dbReference>
<dbReference type="InterPro" id="IPR036291">
    <property type="entry name" value="NAD(P)-bd_dom_sf"/>
</dbReference>
<dbReference type="InterPro" id="IPR000672">
    <property type="entry name" value="THF_DH/CycHdrlase"/>
</dbReference>
<dbReference type="InterPro" id="IPR020630">
    <property type="entry name" value="THF_DH/CycHdrlase_cat_dom"/>
</dbReference>
<dbReference type="InterPro" id="IPR020631">
    <property type="entry name" value="THF_DH/CycHdrlase_NAD-bd_dom"/>
</dbReference>
<dbReference type="NCBIfam" id="NF010789">
    <property type="entry name" value="PRK14193.1"/>
    <property type="match status" value="1"/>
</dbReference>
<dbReference type="PANTHER" id="PTHR48099:SF5">
    <property type="entry name" value="C-1-TETRAHYDROFOLATE SYNTHASE, CYTOPLASMIC"/>
    <property type="match status" value="1"/>
</dbReference>
<dbReference type="PANTHER" id="PTHR48099">
    <property type="entry name" value="C-1-TETRAHYDROFOLATE SYNTHASE, CYTOPLASMIC-RELATED"/>
    <property type="match status" value="1"/>
</dbReference>
<dbReference type="Pfam" id="PF00763">
    <property type="entry name" value="THF_DHG_CYH"/>
    <property type="match status" value="1"/>
</dbReference>
<dbReference type="Pfam" id="PF02882">
    <property type="entry name" value="THF_DHG_CYH_C"/>
    <property type="match status" value="1"/>
</dbReference>
<dbReference type="PRINTS" id="PR00085">
    <property type="entry name" value="THFDHDRGNASE"/>
</dbReference>
<dbReference type="SUPFAM" id="SSF53223">
    <property type="entry name" value="Aminoacid dehydrogenase-like, N-terminal domain"/>
    <property type="match status" value="1"/>
</dbReference>
<dbReference type="SUPFAM" id="SSF51735">
    <property type="entry name" value="NAD(P)-binding Rossmann-fold domains"/>
    <property type="match status" value="1"/>
</dbReference>
<name>FOLD_CORGB</name>
<keyword id="KW-0028">Amino-acid biosynthesis</keyword>
<keyword id="KW-0368">Histidine biosynthesis</keyword>
<keyword id="KW-0378">Hydrolase</keyword>
<keyword id="KW-0486">Methionine biosynthesis</keyword>
<keyword id="KW-0511">Multifunctional enzyme</keyword>
<keyword id="KW-0521">NADP</keyword>
<keyword id="KW-0554">One-carbon metabolism</keyword>
<keyword id="KW-0560">Oxidoreductase</keyword>
<keyword id="KW-0658">Purine biosynthesis</keyword>
<gene>
    <name evidence="1" type="primary">folD</name>
    <name type="ordered locus">cgR_0763</name>
</gene>
<sequence length="284" mass="30150">MTAIKLDGNLYRGEIFADLEQRVAALKEKGIVPGLATVLVGDDPASHSYVKMKHRDCEQIGVNSIRKDLPADVTQEELFAVIDELNNDDSCTGYIVQLPLPKHLDENAVLERIDPAKDADGLHPVNLGKLVLNEPAPLPCTPNGSISLLRRFGVELDGAKVVVIGRGVTVGRPIGLMLTRRSENSTVTLCHTGTKDLAAETRAADVIIAAAGQPHMLTADMVKPGAAVLDVGVSRKDGKLLGDVHPDVWEVAGAVSPNPGGVGPLTRAFLVHNVVERAEKLAGL</sequence>
<protein>
    <recommendedName>
        <fullName evidence="1">Bifunctional protein FolD</fullName>
    </recommendedName>
    <domain>
        <recommendedName>
            <fullName evidence="1">Methylenetetrahydrofolate dehydrogenase</fullName>
            <ecNumber evidence="1">1.5.1.5</ecNumber>
        </recommendedName>
    </domain>
    <domain>
        <recommendedName>
            <fullName evidence="1">Methenyltetrahydrofolate cyclohydrolase</fullName>
            <ecNumber evidence="1">3.5.4.9</ecNumber>
        </recommendedName>
    </domain>
</protein>
<reference key="1">
    <citation type="journal article" date="2007" name="Microbiology">
        <title>Comparative analysis of the Corynebacterium glutamicum group and complete genome sequence of strain R.</title>
        <authorList>
            <person name="Yukawa H."/>
            <person name="Omumasaba C.A."/>
            <person name="Nonaka H."/>
            <person name="Kos P."/>
            <person name="Okai N."/>
            <person name="Suzuki N."/>
            <person name="Suda M."/>
            <person name="Tsuge Y."/>
            <person name="Watanabe J."/>
            <person name="Ikeda Y."/>
            <person name="Vertes A.A."/>
            <person name="Inui M."/>
        </authorList>
    </citation>
    <scope>NUCLEOTIDE SEQUENCE [LARGE SCALE GENOMIC DNA]</scope>
    <source>
        <strain>R</strain>
    </source>
</reference>